<evidence type="ECO:0000255" key="1">
    <source>
        <dbReference type="HAMAP-Rule" id="MF_00115"/>
    </source>
</evidence>
<feature type="chain" id="PRO_1000191370" description="Large-conductance mechanosensitive channel">
    <location>
        <begin position="1"/>
        <end position="136"/>
    </location>
</feature>
<feature type="transmembrane region" description="Helical" evidence="1">
    <location>
        <begin position="10"/>
        <end position="30"/>
    </location>
</feature>
<feature type="transmembrane region" description="Helical" evidence="1">
    <location>
        <begin position="76"/>
        <end position="96"/>
    </location>
</feature>
<reference key="1">
    <citation type="journal article" date="2009" name="PLoS Genet.">
        <title>Organised genome dynamics in the Escherichia coli species results in highly diverse adaptive paths.</title>
        <authorList>
            <person name="Touchon M."/>
            <person name="Hoede C."/>
            <person name="Tenaillon O."/>
            <person name="Barbe V."/>
            <person name="Baeriswyl S."/>
            <person name="Bidet P."/>
            <person name="Bingen E."/>
            <person name="Bonacorsi S."/>
            <person name="Bouchier C."/>
            <person name="Bouvet O."/>
            <person name="Calteau A."/>
            <person name="Chiapello H."/>
            <person name="Clermont O."/>
            <person name="Cruveiller S."/>
            <person name="Danchin A."/>
            <person name="Diard M."/>
            <person name="Dossat C."/>
            <person name="Karoui M.E."/>
            <person name="Frapy E."/>
            <person name="Garry L."/>
            <person name="Ghigo J.M."/>
            <person name="Gilles A.M."/>
            <person name="Johnson J."/>
            <person name="Le Bouguenec C."/>
            <person name="Lescat M."/>
            <person name="Mangenot S."/>
            <person name="Martinez-Jehanne V."/>
            <person name="Matic I."/>
            <person name="Nassif X."/>
            <person name="Oztas S."/>
            <person name="Petit M.A."/>
            <person name="Pichon C."/>
            <person name="Rouy Z."/>
            <person name="Ruf C.S."/>
            <person name="Schneider D."/>
            <person name="Tourret J."/>
            <person name="Vacherie B."/>
            <person name="Vallenet D."/>
            <person name="Medigue C."/>
            <person name="Rocha E.P.C."/>
            <person name="Denamur E."/>
        </authorList>
    </citation>
    <scope>NUCLEOTIDE SEQUENCE [LARGE SCALE GENOMIC DNA]</scope>
    <source>
        <strain>IAI1</strain>
    </source>
</reference>
<name>MSCL_ECO8A</name>
<gene>
    <name evidence="1" type="primary">mscL</name>
    <name type="ordered locus">ECIAI1_3440</name>
</gene>
<accession>B7M0Z6</accession>
<comment type="function">
    <text evidence="1">Channel that opens in response to stretch forces in the membrane lipid bilayer. May participate in the regulation of osmotic pressure changes within the cell.</text>
</comment>
<comment type="subunit">
    <text evidence="1">Homopentamer.</text>
</comment>
<comment type="subcellular location">
    <subcellularLocation>
        <location evidence="1">Cell inner membrane</location>
        <topology evidence="1">Multi-pass membrane protein</topology>
    </subcellularLocation>
</comment>
<comment type="similarity">
    <text evidence="1">Belongs to the MscL family.</text>
</comment>
<organism>
    <name type="scientific">Escherichia coli O8 (strain IAI1)</name>
    <dbReference type="NCBI Taxonomy" id="585034"/>
    <lineage>
        <taxon>Bacteria</taxon>
        <taxon>Pseudomonadati</taxon>
        <taxon>Pseudomonadota</taxon>
        <taxon>Gammaproteobacteria</taxon>
        <taxon>Enterobacterales</taxon>
        <taxon>Enterobacteriaceae</taxon>
        <taxon>Escherichia</taxon>
    </lineage>
</organism>
<proteinExistence type="inferred from homology"/>
<keyword id="KW-0997">Cell inner membrane</keyword>
<keyword id="KW-1003">Cell membrane</keyword>
<keyword id="KW-0407">Ion channel</keyword>
<keyword id="KW-0406">Ion transport</keyword>
<keyword id="KW-0472">Membrane</keyword>
<keyword id="KW-0812">Transmembrane</keyword>
<keyword id="KW-1133">Transmembrane helix</keyword>
<keyword id="KW-0813">Transport</keyword>
<dbReference type="EMBL" id="CU928160">
    <property type="protein sequence ID" value="CAR00242.1"/>
    <property type="molecule type" value="Genomic_DNA"/>
</dbReference>
<dbReference type="RefSeq" id="WP_000022442.1">
    <property type="nucleotide sequence ID" value="NC_011741.1"/>
</dbReference>
<dbReference type="SMR" id="B7M0Z6"/>
<dbReference type="GeneID" id="75173461"/>
<dbReference type="KEGG" id="ecr:ECIAI1_3440"/>
<dbReference type="HOGENOM" id="CLU_095787_0_0_6"/>
<dbReference type="GO" id="GO:0005886">
    <property type="term" value="C:plasma membrane"/>
    <property type="evidence" value="ECO:0007669"/>
    <property type="project" value="UniProtKB-SubCell"/>
</dbReference>
<dbReference type="GO" id="GO:0008381">
    <property type="term" value="F:mechanosensitive monoatomic ion channel activity"/>
    <property type="evidence" value="ECO:0007669"/>
    <property type="project" value="UniProtKB-UniRule"/>
</dbReference>
<dbReference type="FunFam" id="1.10.1200.120:FF:000001">
    <property type="entry name" value="Large-conductance mechanosensitive channel"/>
    <property type="match status" value="1"/>
</dbReference>
<dbReference type="Gene3D" id="1.10.1200.120">
    <property type="entry name" value="Large-conductance mechanosensitive channel, MscL, domain 1"/>
    <property type="match status" value="1"/>
</dbReference>
<dbReference type="HAMAP" id="MF_00115">
    <property type="entry name" value="MscL"/>
    <property type="match status" value="1"/>
</dbReference>
<dbReference type="InterPro" id="IPR019823">
    <property type="entry name" value="Mechanosensitive_channel_CS"/>
</dbReference>
<dbReference type="InterPro" id="IPR001185">
    <property type="entry name" value="MS_channel"/>
</dbReference>
<dbReference type="InterPro" id="IPR037673">
    <property type="entry name" value="MSC/AndL"/>
</dbReference>
<dbReference type="InterPro" id="IPR036019">
    <property type="entry name" value="MscL_channel"/>
</dbReference>
<dbReference type="NCBIfam" id="TIGR00220">
    <property type="entry name" value="mscL"/>
    <property type="match status" value="1"/>
</dbReference>
<dbReference type="NCBIfam" id="NF001841">
    <property type="entry name" value="PRK00567.1-1"/>
    <property type="match status" value="1"/>
</dbReference>
<dbReference type="NCBIfam" id="NF001843">
    <property type="entry name" value="PRK00567.1-4"/>
    <property type="match status" value="1"/>
</dbReference>
<dbReference type="PANTHER" id="PTHR30266:SF2">
    <property type="entry name" value="LARGE-CONDUCTANCE MECHANOSENSITIVE CHANNEL"/>
    <property type="match status" value="1"/>
</dbReference>
<dbReference type="PANTHER" id="PTHR30266">
    <property type="entry name" value="MECHANOSENSITIVE CHANNEL MSCL"/>
    <property type="match status" value="1"/>
</dbReference>
<dbReference type="Pfam" id="PF01741">
    <property type="entry name" value="MscL"/>
    <property type="match status" value="1"/>
</dbReference>
<dbReference type="PRINTS" id="PR01264">
    <property type="entry name" value="MECHCHANNEL"/>
</dbReference>
<dbReference type="SUPFAM" id="SSF81330">
    <property type="entry name" value="Gated mechanosensitive channel"/>
    <property type="match status" value="1"/>
</dbReference>
<dbReference type="PROSITE" id="PS01327">
    <property type="entry name" value="MSCL"/>
    <property type="match status" value="1"/>
</dbReference>
<protein>
    <recommendedName>
        <fullName evidence="1">Large-conductance mechanosensitive channel</fullName>
    </recommendedName>
</protein>
<sequence>MSIIKEFREFAMRGNVVDLAVGVIIGAAFGKIVSSLVADIIMPPLGLLIGGIDFKQFAVTLRDAQGDIPAVVMHYGVFIQNVFDFLIVAFAIFMAIKLINKLNRKKEEPAAAPAPTKEEVLLTEIRDLLKEQNNRS</sequence>